<organism evidence="5">
    <name type="scientific">Entamoeba histolytica (strain ATCC 30459 / HM-1:IMSS / ABRM)</name>
    <dbReference type="NCBI Taxonomy" id="294381"/>
    <lineage>
        <taxon>Eukaryota</taxon>
        <taxon>Amoebozoa</taxon>
        <taxon>Evosea</taxon>
        <taxon>Archamoebae</taxon>
        <taxon>Mastigamoebida</taxon>
        <taxon>Entamoebidae</taxon>
        <taxon>Entamoeba</taxon>
    </lineage>
</organism>
<reference key="1">
    <citation type="submission" date="1994-09" db="EMBL/GenBank/DDBJ databases">
        <authorList>
            <person name="Tanaka T."/>
        </authorList>
    </citation>
    <scope>NUCLEOTIDE SEQUENCE [MRNA]</scope>
    <source>
        <strain>ATCC 30459 / HM-1:IMSS / ABRM</strain>
    </source>
</reference>
<reference key="2">
    <citation type="journal article" date="1995" name="Mol. Biochem. Parasitol.">
        <title>Sequence and organization of an unusual histone H4 gene in the human parasite Entamoeba histolytica.</title>
        <authorList>
            <person name="Binder M."/>
            <person name="Ortner S."/>
            <person name="Plaimauer B."/>
            <person name="Fodinger M."/>
            <person name="Wiedermann G."/>
            <person name="Scheiner O."/>
            <person name="Duchene M."/>
        </authorList>
    </citation>
    <scope>NUCLEOTIDE SEQUENCE [GENOMIC DNA / MRNA]</scope>
    <source>
        <strain>SFL-3</strain>
    </source>
</reference>
<reference evidence="5" key="3">
    <citation type="journal article" date="2005" name="Nature">
        <title>The genome of the protist parasite Entamoeba histolytica.</title>
        <authorList>
            <person name="Loftus B.J."/>
            <person name="Anderson I."/>
            <person name="Davies R."/>
            <person name="Alsmark U.C."/>
            <person name="Samuelson J."/>
            <person name="Amedeo P."/>
            <person name="Roncaglia P."/>
            <person name="Berriman M."/>
            <person name="Hirt R.P."/>
            <person name="Mann B.J."/>
            <person name="Nozaki T."/>
            <person name="Suh B."/>
            <person name="Pop M."/>
            <person name="Duchene M."/>
            <person name="Ackers J."/>
            <person name="Tannich E."/>
            <person name="Leippe M."/>
            <person name="Hofer M."/>
            <person name="Bruchhaus I."/>
            <person name="Willhoeft U."/>
            <person name="Bhattacharya A."/>
            <person name="Chillingworth T."/>
            <person name="Churcher C.M."/>
            <person name="Hance Z."/>
            <person name="Harris B."/>
            <person name="Harris D."/>
            <person name="Jagels K."/>
            <person name="Moule S."/>
            <person name="Mungall K.L."/>
            <person name="Ormond D."/>
            <person name="Squares R."/>
            <person name="Whitehead S."/>
            <person name="Quail M.A."/>
            <person name="Rabbinowitsch E."/>
            <person name="Norbertczak H."/>
            <person name="Price C."/>
            <person name="Wang Z."/>
            <person name="Guillen N."/>
            <person name="Gilchrist C."/>
            <person name="Stroup S.E."/>
            <person name="Bhattacharya S."/>
            <person name="Lohia A."/>
            <person name="Foster P.G."/>
            <person name="Sicheritz-Ponten T."/>
            <person name="Weber C."/>
            <person name="Singh U."/>
            <person name="Mukherjee C."/>
            <person name="El-Sayed N.M.A."/>
            <person name="Petri W.A."/>
            <person name="Clark C.G."/>
            <person name="Embley T.M."/>
            <person name="Barrell B.G."/>
            <person name="Fraser C.M."/>
            <person name="Hall N."/>
        </authorList>
    </citation>
    <scope>NUCLEOTIDE SEQUENCE [LARGE SCALE GENOMIC DNA]</scope>
    <source>
        <strain evidence="5">ATCC 30459 / HM-1:IMSS / ABRM</strain>
    </source>
</reference>
<proteinExistence type="inferred from homology"/>
<gene>
    <name evidence="5" type="ORF">EHI_023230</name>
</gene>
<accession>P40287</accession>
<accession>A0A175JFT2</accession>
<accession>C4LUN4</accession>
<dbReference type="EMBL" id="L35898">
    <property type="protein sequence ID" value="AAB67323.1"/>
    <property type="molecule type" value="mRNA"/>
</dbReference>
<dbReference type="EMBL" id="X84010">
    <property type="protein sequence ID" value="CAA58833.1"/>
    <property type="molecule type" value="mRNA"/>
</dbReference>
<dbReference type="EMBL" id="X84009">
    <property type="protein sequence ID" value="CAA58831.1"/>
    <property type="molecule type" value="Genomic_DNA"/>
</dbReference>
<dbReference type="EMBL" id="DS571153">
    <property type="protein sequence ID" value="EAL50266.1"/>
    <property type="molecule type" value="Genomic_DNA"/>
</dbReference>
<dbReference type="PIR" id="S52264">
    <property type="entry name" value="S52262"/>
</dbReference>
<dbReference type="RefSeq" id="XP_655649.1">
    <property type="nucleotide sequence ID" value="XM_650557.2"/>
</dbReference>
<dbReference type="SMR" id="P40287"/>
<dbReference type="STRING" id="5759.C4LUN4"/>
<dbReference type="EnsemblProtists" id="GAT92334">
    <property type="protein sequence ID" value="GAT92334"/>
    <property type="gene ID" value="CL6EHI_023230"/>
</dbReference>
<dbReference type="EnsemblProtists" id="rna_EHI_023230-1">
    <property type="protein sequence ID" value="rna_EHI_023230-1"/>
    <property type="gene ID" value="EHI_023230"/>
</dbReference>
<dbReference type="GeneID" id="3409966"/>
<dbReference type="KEGG" id="ehi:EHI_023230"/>
<dbReference type="VEuPathDB" id="AmoebaDB:EHI5A_006250"/>
<dbReference type="VEuPathDB" id="AmoebaDB:EHI7A_024330"/>
<dbReference type="VEuPathDB" id="AmoebaDB:EHI8A_083340"/>
<dbReference type="VEuPathDB" id="AmoebaDB:EHI_023230"/>
<dbReference type="VEuPathDB" id="AmoebaDB:KM1_004770"/>
<dbReference type="eggNOG" id="KOG3467">
    <property type="taxonomic scope" value="Eukaryota"/>
</dbReference>
<dbReference type="HOGENOM" id="CLU_109117_2_3_1"/>
<dbReference type="OMA" id="QKEHING"/>
<dbReference type="OrthoDB" id="30042at2759"/>
<dbReference type="Proteomes" id="UP000001926">
    <property type="component" value="Partially assembled WGS sequence"/>
</dbReference>
<dbReference type="GO" id="GO:0000786">
    <property type="term" value="C:nucleosome"/>
    <property type="evidence" value="ECO:0007669"/>
    <property type="project" value="UniProtKB-KW"/>
</dbReference>
<dbReference type="GO" id="GO:0005634">
    <property type="term" value="C:nucleus"/>
    <property type="evidence" value="ECO:0007669"/>
    <property type="project" value="UniProtKB-SubCell"/>
</dbReference>
<dbReference type="GO" id="GO:0003677">
    <property type="term" value="F:DNA binding"/>
    <property type="evidence" value="ECO:0000318"/>
    <property type="project" value="GO_Central"/>
</dbReference>
<dbReference type="GO" id="GO:0046982">
    <property type="term" value="F:protein heterodimerization activity"/>
    <property type="evidence" value="ECO:0007669"/>
    <property type="project" value="InterPro"/>
</dbReference>
<dbReference type="GO" id="GO:0030527">
    <property type="term" value="F:structural constituent of chromatin"/>
    <property type="evidence" value="ECO:0007669"/>
    <property type="project" value="InterPro"/>
</dbReference>
<dbReference type="GO" id="GO:0006334">
    <property type="term" value="P:nucleosome assembly"/>
    <property type="evidence" value="ECO:0000318"/>
    <property type="project" value="GO_Central"/>
</dbReference>
<dbReference type="CDD" id="cd22912">
    <property type="entry name" value="HFD_H4"/>
    <property type="match status" value="1"/>
</dbReference>
<dbReference type="FunFam" id="1.10.20.10:FF:000012">
    <property type="entry name" value="Histone H4"/>
    <property type="match status" value="1"/>
</dbReference>
<dbReference type="Gene3D" id="1.10.20.10">
    <property type="entry name" value="Histone, subunit A"/>
    <property type="match status" value="1"/>
</dbReference>
<dbReference type="InterPro" id="IPR035425">
    <property type="entry name" value="CENP-T/H4_C"/>
</dbReference>
<dbReference type="InterPro" id="IPR009072">
    <property type="entry name" value="Histone-fold"/>
</dbReference>
<dbReference type="InterPro" id="IPR001951">
    <property type="entry name" value="Histone_H4"/>
</dbReference>
<dbReference type="PANTHER" id="PTHR10484">
    <property type="entry name" value="HISTONE H4"/>
    <property type="match status" value="1"/>
</dbReference>
<dbReference type="Pfam" id="PF15511">
    <property type="entry name" value="CENP-T_C"/>
    <property type="match status" value="1"/>
</dbReference>
<dbReference type="PRINTS" id="PR00623">
    <property type="entry name" value="HISTONEH4"/>
</dbReference>
<dbReference type="SMART" id="SM00417">
    <property type="entry name" value="H4"/>
    <property type="match status" value="1"/>
</dbReference>
<dbReference type="SUPFAM" id="SSF47113">
    <property type="entry name" value="Histone-fold"/>
    <property type="match status" value="1"/>
</dbReference>
<sequence>MATDTGSGRGKGGKGVTLGKGSKGAKASKGGKRIRTKTQQDALKGITKPAIRRLARRGGVKRINGAVYDETRNVLKQFLEQVIRDSVTYTEHAKRRTVTAMDVVYALKRQGRTLYGYS</sequence>
<protein>
    <recommendedName>
        <fullName evidence="3">Histone H4</fullName>
    </recommendedName>
</protein>
<comment type="function">
    <text>Core component of nucleosome. Nucleosomes wrap and compact DNA into chromatin, limiting DNA accessibility to the cellular machineries which require DNA as a template. Histones thereby play a central role in transcription regulation, DNA repair, DNA replication and chromosomal stability. DNA accessibility is regulated via a complex set of post-translational modifications of histones, also called histone code, and nucleosome remodeling.</text>
</comment>
<comment type="subunit">
    <text>The nucleosome is a histone octamer containing two molecules each of H2A, H2B, H3 and H4 assembled in one H3-H4 heterotetramer and two H2A-H2B heterodimers. The octamer wraps approximately 147 bp of DNA.</text>
</comment>
<comment type="subcellular location">
    <subcellularLocation>
        <location evidence="1">Nucleus</location>
    </subcellularLocation>
    <subcellularLocation>
        <location evidence="1">Chromosome</location>
    </subcellularLocation>
</comment>
<comment type="similarity">
    <text evidence="4">Belongs to the histone H4 family.</text>
</comment>
<name>H4_ENTH1</name>
<evidence type="ECO:0000250" key="1"/>
<evidence type="ECO:0000256" key="2">
    <source>
        <dbReference type="SAM" id="MobiDB-lite"/>
    </source>
</evidence>
<evidence type="ECO:0000303" key="3">
    <source>
    </source>
</evidence>
<evidence type="ECO:0000305" key="4"/>
<evidence type="ECO:0000312" key="5">
    <source>
        <dbReference type="EMBL" id="EAL50266.1"/>
    </source>
</evidence>
<keyword id="KW-0158">Chromosome</keyword>
<keyword id="KW-0238">DNA-binding</keyword>
<keyword id="KW-0544">Nucleosome core</keyword>
<keyword id="KW-0539">Nucleus</keyword>
<keyword id="KW-1185">Reference proteome</keyword>
<feature type="chain" id="PRO_0000158315" description="Histone H4">
    <location>
        <begin position="1"/>
        <end position="118"/>
    </location>
</feature>
<feature type="region of interest" description="Disordered" evidence="2">
    <location>
        <begin position="1"/>
        <end position="39"/>
    </location>
</feature>
<feature type="compositionally biased region" description="Gly residues" evidence="2">
    <location>
        <begin position="7"/>
        <end position="22"/>
    </location>
</feature>